<accession>B9W8T5</accession>
<dbReference type="EMBL" id="FM992688">
    <property type="protein sequence ID" value="CAX45158.1"/>
    <property type="molecule type" value="Genomic_DNA"/>
</dbReference>
<dbReference type="RefSeq" id="XP_002417505.1">
    <property type="nucleotide sequence ID" value="XM_002417460.1"/>
</dbReference>
<dbReference type="SMR" id="B9W8T5"/>
<dbReference type="GeneID" id="8045050"/>
<dbReference type="KEGG" id="cdu:CD36_08610"/>
<dbReference type="CGD" id="CAL0000162686">
    <property type="gene designation" value="Cd36_08610"/>
</dbReference>
<dbReference type="eggNOG" id="ENOG502QW7A">
    <property type="taxonomic scope" value="Eukaryota"/>
</dbReference>
<dbReference type="HOGENOM" id="CLU_043316_0_0_1"/>
<dbReference type="OrthoDB" id="5983572at2759"/>
<dbReference type="Proteomes" id="UP000002605">
    <property type="component" value="Chromosome 1"/>
</dbReference>
<dbReference type="GO" id="GO:0005886">
    <property type="term" value="C:plasma membrane"/>
    <property type="evidence" value="ECO:0007669"/>
    <property type="project" value="UniProtKB-SubCell"/>
</dbReference>
<dbReference type="GO" id="GO:0030447">
    <property type="term" value="P:filamentous growth"/>
    <property type="evidence" value="ECO:0007669"/>
    <property type="project" value="UniProtKB-ARBA"/>
</dbReference>
<dbReference type="GO" id="GO:0030833">
    <property type="term" value="P:regulation of actin filament polymerization"/>
    <property type="evidence" value="ECO:0007669"/>
    <property type="project" value="TreeGrafter"/>
</dbReference>
<dbReference type="CDD" id="cd11855">
    <property type="entry name" value="SH3_Sho1p"/>
    <property type="match status" value="1"/>
</dbReference>
<dbReference type="FunFam" id="2.30.30.40:FF:000213">
    <property type="entry name" value="High osmolarity signaling protein SHO1"/>
    <property type="match status" value="1"/>
</dbReference>
<dbReference type="Gene3D" id="2.30.30.40">
    <property type="entry name" value="SH3 Domains"/>
    <property type="match status" value="1"/>
</dbReference>
<dbReference type="InterPro" id="IPR036028">
    <property type="entry name" value="SH3-like_dom_sf"/>
</dbReference>
<dbReference type="InterPro" id="IPR001452">
    <property type="entry name" value="SH3_domain"/>
</dbReference>
<dbReference type="InterPro" id="IPR035522">
    <property type="entry name" value="Sho1_SH3"/>
</dbReference>
<dbReference type="PANTHER" id="PTHR15735">
    <property type="entry name" value="FCH AND DOUBLE SH3 DOMAINS PROTEIN"/>
    <property type="match status" value="1"/>
</dbReference>
<dbReference type="PANTHER" id="PTHR15735:SF20">
    <property type="entry name" value="HIGH OSMOLARITY SIGNALING PROTEIN SHO1"/>
    <property type="match status" value="1"/>
</dbReference>
<dbReference type="Pfam" id="PF14604">
    <property type="entry name" value="SH3_9"/>
    <property type="match status" value="1"/>
</dbReference>
<dbReference type="PRINTS" id="PR00452">
    <property type="entry name" value="SH3DOMAIN"/>
</dbReference>
<dbReference type="SMART" id="SM00326">
    <property type="entry name" value="SH3"/>
    <property type="match status" value="1"/>
</dbReference>
<dbReference type="SUPFAM" id="SSF50044">
    <property type="entry name" value="SH3-domain"/>
    <property type="match status" value="1"/>
</dbReference>
<dbReference type="PROSITE" id="PS50002">
    <property type="entry name" value="SH3"/>
    <property type="match status" value="1"/>
</dbReference>
<organism>
    <name type="scientific">Candida dubliniensis (strain CD36 / ATCC MYA-646 / CBS 7987 / NCPF 3949 / NRRL Y-17841)</name>
    <name type="common">Yeast</name>
    <dbReference type="NCBI Taxonomy" id="573826"/>
    <lineage>
        <taxon>Eukaryota</taxon>
        <taxon>Fungi</taxon>
        <taxon>Dikarya</taxon>
        <taxon>Ascomycota</taxon>
        <taxon>Saccharomycotina</taxon>
        <taxon>Pichiomycetes</taxon>
        <taxon>Debaryomycetaceae</taxon>
        <taxon>Candida/Lodderomyces clade</taxon>
        <taxon>Candida</taxon>
    </lineage>
</organism>
<evidence type="ECO:0000250" key="1"/>
<evidence type="ECO:0000255" key="2"/>
<evidence type="ECO:0000255" key="3">
    <source>
        <dbReference type="PROSITE-ProRule" id="PRU00192"/>
    </source>
</evidence>
<evidence type="ECO:0000256" key="4">
    <source>
        <dbReference type="SAM" id="MobiDB-lite"/>
    </source>
</evidence>
<evidence type="ECO:0000305" key="5"/>
<sequence length="398" mass="42977">MGFSLLNFTGDPFAISTVSFGIMSWVVAIAGAASSKQQTFPHFSWWGISYQIVIILIIFVLYANNNIELYKFTLVGLVSIAFIYTTNSTNNLIYNSNSPGNLCCAAGCILLSILNLIWILYFGGHPESPTNQFIDSFSIRGQGHEQLGSGSHNHNHNLNNANTNTNTNMPLGGGNGIIGKSELSPYDDRFASPINISGGTNQPTSESLRLASVGQMGNGPFSNTTGNPNLQQPLTGSFGGSTNHTPTNANTNTNTTTTNNNNNNTGYMTSSHLTGLENFSSPNVPNNGIGLTRDLTHNSNSLNNNSHNGATGSINNSNNTNKRNTIYTDSETGTGITFRYKAKALYSYDANPDDINEISFVKDEILEVDDIDGKWWQARRANGQVGICPSNYVKLLDT</sequence>
<name>SHO1_CANDC</name>
<gene>
    <name type="primary">SHO1</name>
    <name type="ORF">CD36_08610</name>
</gene>
<comment type="function">
    <text evidence="1">Plasma membrane osmosensor that activates the high osmolarity glycerol (HOG) MAPK signaling pathway in response to high osmolarity.</text>
</comment>
<comment type="subunit">
    <text evidence="1">Forms homooligomers.</text>
</comment>
<comment type="subcellular location">
    <subcellularLocation>
        <location evidence="1">Cell membrane</location>
        <topology evidence="1">Multi-pass membrane protein</topology>
    </subcellularLocation>
</comment>
<comment type="similarity">
    <text evidence="5">Belongs to the SHO1 family.</text>
</comment>
<feature type="chain" id="PRO_0000410365" description="High osmolarity signaling protein SHO1">
    <location>
        <begin position="1"/>
        <end position="398"/>
    </location>
</feature>
<feature type="topological domain" description="Cytoplasmic" evidence="2">
    <location>
        <begin position="1"/>
        <end position="12"/>
    </location>
</feature>
<feature type="transmembrane region" description="Helical" evidence="2">
    <location>
        <begin position="13"/>
        <end position="33"/>
    </location>
</feature>
<feature type="topological domain" description="Extracellular" evidence="2">
    <location>
        <begin position="34"/>
        <end position="42"/>
    </location>
</feature>
<feature type="transmembrane region" description="Helical" evidence="2">
    <location>
        <begin position="43"/>
        <end position="63"/>
    </location>
</feature>
<feature type="topological domain" description="Cytoplasmic" evidence="2">
    <location>
        <begin position="64"/>
        <end position="65"/>
    </location>
</feature>
<feature type="transmembrane region" description="Helical" evidence="2">
    <location>
        <begin position="66"/>
        <end position="86"/>
    </location>
</feature>
<feature type="topological domain" description="Extracellular" evidence="2">
    <location>
        <begin position="87"/>
        <end position="101"/>
    </location>
</feature>
<feature type="transmembrane region" description="Helical" evidence="2">
    <location>
        <begin position="102"/>
        <end position="122"/>
    </location>
</feature>
<feature type="topological domain" description="Cytoplasmic" evidence="2">
    <location>
        <begin position="123"/>
        <end position="398"/>
    </location>
</feature>
<feature type="domain" description="SH3" evidence="3">
    <location>
        <begin position="337"/>
        <end position="398"/>
    </location>
</feature>
<feature type="region of interest" description="Disordered" evidence="4">
    <location>
        <begin position="145"/>
        <end position="167"/>
    </location>
</feature>
<feature type="region of interest" description="Disordered" evidence="4">
    <location>
        <begin position="213"/>
        <end position="327"/>
    </location>
</feature>
<feature type="compositionally biased region" description="Low complexity" evidence="4">
    <location>
        <begin position="156"/>
        <end position="167"/>
    </location>
</feature>
<feature type="compositionally biased region" description="Polar residues" evidence="4">
    <location>
        <begin position="220"/>
        <end position="235"/>
    </location>
</feature>
<feature type="compositionally biased region" description="Low complexity" evidence="4">
    <location>
        <begin position="242"/>
        <end position="265"/>
    </location>
</feature>
<feature type="compositionally biased region" description="Polar residues" evidence="4">
    <location>
        <begin position="266"/>
        <end position="286"/>
    </location>
</feature>
<feature type="compositionally biased region" description="Low complexity" evidence="4">
    <location>
        <begin position="297"/>
        <end position="326"/>
    </location>
</feature>
<proteinExistence type="inferred from homology"/>
<keyword id="KW-1003">Cell membrane</keyword>
<keyword id="KW-0472">Membrane</keyword>
<keyword id="KW-0728">SH3 domain</keyword>
<keyword id="KW-0346">Stress response</keyword>
<keyword id="KW-0812">Transmembrane</keyword>
<keyword id="KW-1133">Transmembrane helix</keyword>
<reference key="1">
    <citation type="journal article" date="2009" name="Genome Res.">
        <title>Comparative genomics of the fungal pathogens Candida dubliniensis and Candida albicans.</title>
        <authorList>
            <person name="Jackson A.P."/>
            <person name="Gamble J.A."/>
            <person name="Yeomans T."/>
            <person name="Moran G.P."/>
            <person name="Saunders D."/>
            <person name="Harris D."/>
            <person name="Aslett M."/>
            <person name="Barrell J.F."/>
            <person name="Butler G."/>
            <person name="Citiulo F."/>
            <person name="Coleman D.C."/>
            <person name="de Groot P.W.J."/>
            <person name="Goodwin T.J."/>
            <person name="Quail M.A."/>
            <person name="McQuillan J."/>
            <person name="Munro C.A."/>
            <person name="Pain A."/>
            <person name="Poulter R.T."/>
            <person name="Rajandream M.A."/>
            <person name="Renauld H."/>
            <person name="Spiering M.J."/>
            <person name="Tivey A."/>
            <person name="Gow N.A.R."/>
            <person name="Barrell B."/>
            <person name="Sullivan D.J."/>
            <person name="Berriman M."/>
        </authorList>
    </citation>
    <scope>NUCLEOTIDE SEQUENCE [LARGE SCALE GENOMIC DNA]</scope>
    <source>
        <strain>CD36 / ATCC MYA-646 / CBS 7987 / NCPF 3949 / NRRL Y-17841</strain>
    </source>
</reference>
<protein>
    <recommendedName>
        <fullName>High osmolarity signaling protein SHO1</fullName>
    </recommendedName>
    <alternativeName>
        <fullName>Osmosensor SHO1</fullName>
    </alternativeName>
</protein>